<feature type="chain" id="PRO_0000138164" description="CTP synthase">
    <location>
        <begin position="1"/>
        <end position="532"/>
    </location>
</feature>
<feature type="domain" description="Glutamine amidotransferase type-1" evidence="1">
    <location>
        <begin position="293"/>
        <end position="532"/>
    </location>
</feature>
<feature type="region of interest" description="Amidoligase domain" evidence="1">
    <location>
        <begin position="1"/>
        <end position="268"/>
    </location>
</feature>
<feature type="active site" description="Nucleophile; for glutamine hydrolysis" evidence="1">
    <location>
        <position position="382"/>
    </location>
</feature>
<feature type="active site" evidence="1">
    <location>
        <position position="508"/>
    </location>
</feature>
<feature type="active site" evidence="1">
    <location>
        <position position="510"/>
    </location>
</feature>
<feature type="binding site" evidence="1">
    <location>
        <position position="14"/>
    </location>
    <ligand>
        <name>CTP</name>
        <dbReference type="ChEBI" id="CHEBI:37563"/>
        <note>allosteric inhibitor</note>
    </ligand>
</feature>
<feature type="binding site" evidence="1">
    <location>
        <position position="14"/>
    </location>
    <ligand>
        <name>UTP</name>
        <dbReference type="ChEBI" id="CHEBI:46398"/>
    </ligand>
</feature>
<feature type="binding site" evidence="1">
    <location>
        <begin position="15"/>
        <end position="20"/>
    </location>
    <ligand>
        <name>ATP</name>
        <dbReference type="ChEBI" id="CHEBI:30616"/>
    </ligand>
</feature>
<feature type="binding site" evidence="1">
    <location>
        <position position="55"/>
    </location>
    <ligand>
        <name>L-glutamine</name>
        <dbReference type="ChEBI" id="CHEBI:58359"/>
    </ligand>
</feature>
<feature type="binding site" evidence="1">
    <location>
        <position position="72"/>
    </location>
    <ligand>
        <name>ATP</name>
        <dbReference type="ChEBI" id="CHEBI:30616"/>
    </ligand>
</feature>
<feature type="binding site" evidence="1">
    <location>
        <position position="72"/>
    </location>
    <ligand>
        <name>Mg(2+)</name>
        <dbReference type="ChEBI" id="CHEBI:18420"/>
    </ligand>
</feature>
<feature type="binding site" evidence="1">
    <location>
        <position position="142"/>
    </location>
    <ligand>
        <name>Mg(2+)</name>
        <dbReference type="ChEBI" id="CHEBI:18420"/>
    </ligand>
</feature>
<feature type="binding site" evidence="1">
    <location>
        <begin position="149"/>
        <end position="151"/>
    </location>
    <ligand>
        <name>CTP</name>
        <dbReference type="ChEBI" id="CHEBI:37563"/>
        <note>allosteric inhibitor</note>
    </ligand>
</feature>
<feature type="binding site" evidence="1">
    <location>
        <begin position="189"/>
        <end position="194"/>
    </location>
    <ligand>
        <name>CTP</name>
        <dbReference type="ChEBI" id="CHEBI:37563"/>
        <note>allosteric inhibitor</note>
    </ligand>
</feature>
<feature type="binding site" evidence="1">
    <location>
        <begin position="189"/>
        <end position="194"/>
    </location>
    <ligand>
        <name>UTP</name>
        <dbReference type="ChEBI" id="CHEBI:46398"/>
    </ligand>
</feature>
<feature type="binding site" evidence="1">
    <location>
        <position position="225"/>
    </location>
    <ligand>
        <name>CTP</name>
        <dbReference type="ChEBI" id="CHEBI:37563"/>
        <note>allosteric inhibitor</note>
    </ligand>
</feature>
<feature type="binding site" evidence="1">
    <location>
        <position position="225"/>
    </location>
    <ligand>
        <name>UTP</name>
        <dbReference type="ChEBI" id="CHEBI:46398"/>
    </ligand>
</feature>
<feature type="binding site" evidence="1">
    <location>
        <begin position="241"/>
        <end position="243"/>
    </location>
    <ligand>
        <name>ATP</name>
        <dbReference type="ChEBI" id="CHEBI:30616"/>
    </ligand>
</feature>
<feature type="binding site" evidence="1">
    <location>
        <position position="355"/>
    </location>
    <ligand>
        <name>L-glutamine</name>
        <dbReference type="ChEBI" id="CHEBI:58359"/>
    </ligand>
</feature>
<feature type="binding site" evidence="1">
    <location>
        <begin position="383"/>
        <end position="386"/>
    </location>
    <ligand>
        <name>L-glutamine</name>
        <dbReference type="ChEBI" id="CHEBI:58359"/>
    </ligand>
</feature>
<feature type="binding site" evidence="1">
    <location>
        <position position="406"/>
    </location>
    <ligand>
        <name>L-glutamine</name>
        <dbReference type="ChEBI" id="CHEBI:58359"/>
    </ligand>
</feature>
<feature type="binding site" evidence="1">
    <location>
        <position position="463"/>
    </location>
    <ligand>
        <name>L-glutamine</name>
        <dbReference type="ChEBI" id="CHEBI:58359"/>
    </ligand>
</feature>
<name>PYRG_HALH5</name>
<protein>
    <recommendedName>
        <fullName evidence="1">CTP synthase</fullName>
        <ecNumber evidence="1">6.3.4.2</ecNumber>
    </recommendedName>
    <alternativeName>
        <fullName evidence="1">Cytidine 5'-triphosphate synthase</fullName>
    </alternativeName>
    <alternativeName>
        <fullName evidence="1">Cytidine triphosphate synthetase</fullName>
        <shortName evidence="1">CTP synthetase</shortName>
        <shortName evidence="1">CTPS</shortName>
    </alternativeName>
    <alternativeName>
        <fullName evidence="1">UTP--ammonia ligase</fullName>
    </alternativeName>
</protein>
<organism>
    <name type="scientific">Halalkalibacterium halodurans (strain ATCC BAA-125 / DSM 18197 / FERM 7344 / JCM 9153 / C-125)</name>
    <name type="common">Bacillus halodurans</name>
    <dbReference type="NCBI Taxonomy" id="272558"/>
    <lineage>
        <taxon>Bacteria</taxon>
        <taxon>Bacillati</taxon>
        <taxon>Bacillota</taxon>
        <taxon>Bacilli</taxon>
        <taxon>Bacillales</taxon>
        <taxon>Bacillaceae</taxon>
        <taxon>Halalkalibacterium (ex Joshi et al. 2022)</taxon>
    </lineage>
</organism>
<keyword id="KW-0067">ATP-binding</keyword>
<keyword id="KW-0315">Glutamine amidotransferase</keyword>
<keyword id="KW-0436">Ligase</keyword>
<keyword id="KW-0460">Magnesium</keyword>
<keyword id="KW-0479">Metal-binding</keyword>
<keyword id="KW-0547">Nucleotide-binding</keyword>
<keyword id="KW-0665">Pyrimidine biosynthesis</keyword>
<keyword id="KW-1185">Reference proteome</keyword>
<accession>Q9K6D7</accession>
<dbReference type="EC" id="6.3.4.2" evidence="1"/>
<dbReference type="EMBL" id="BA000004">
    <property type="protein sequence ID" value="BAB07511.1"/>
    <property type="molecule type" value="Genomic_DNA"/>
</dbReference>
<dbReference type="PIR" id="H84123">
    <property type="entry name" value="H84123"/>
</dbReference>
<dbReference type="RefSeq" id="WP_010899917.1">
    <property type="nucleotide sequence ID" value="NC_002570.2"/>
</dbReference>
<dbReference type="SMR" id="Q9K6D7"/>
<dbReference type="STRING" id="272558.gene:10729705"/>
<dbReference type="MEROPS" id="C26.964"/>
<dbReference type="KEGG" id="bha:BH3792"/>
<dbReference type="eggNOG" id="COG0504">
    <property type="taxonomic scope" value="Bacteria"/>
</dbReference>
<dbReference type="HOGENOM" id="CLU_011675_5_0_9"/>
<dbReference type="OrthoDB" id="9801107at2"/>
<dbReference type="UniPathway" id="UPA00159">
    <property type="reaction ID" value="UER00277"/>
</dbReference>
<dbReference type="Proteomes" id="UP000001258">
    <property type="component" value="Chromosome"/>
</dbReference>
<dbReference type="GO" id="GO:0005829">
    <property type="term" value="C:cytosol"/>
    <property type="evidence" value="ECO:0007669"/>
    <property type="project" value="TreeGrafter"/>
</dbReference>
<dbReference type="GO" id="GO:0005524">
    <property type="term" value="F:ATP binding"/>
    <property type="evidence" value="ECO:0007669"/>
    <property type="project" value="UniProtKB-KW"/>
</dbReference>
<dbReference type="GO" id="GO:0003883">
    <property type="term" value="F:CTP synthase activity"/>
    <property type="evidence" value="ECO:0007669"/>
    <property type="project" value="UniProtKB-UniRule"/>
</dbReference>
<dbReference type="GO" id="GO:0004359">
    <property type="term" value="F:glutaminase activity"/>
    <property type="evidence" value="ECO:0007669"/>
    <property type="project" value="RHEA"/>
</dbReference>
<dbReference type="GO" id="GO:0042802">
    <property type="term" value="F:identical protein binding"/>
    <property type="evidence" value="ECO:0007669"/>
    <property type="project" value="TreeGrafter"/>
</dbReference>
<dbReference type="GO" id="GO:0046872">
    <property type="term" value="F:metal ion binding"/>
    <property type="evidence" value="ECO:0007669"/>
    <property type="project" value="UniProtKB-KW"/>
</dbReference>
<dbReference type="GO" id="GO:0044210">
    <property type="term" value="P:'de novo' CTP biosynthetic process"/>
    <property type="evidence" value="ECO:0007669"/>
    <property type="project" value="UniProtKB-UniRule"/>
</dbReference>
<dbReference type="GO" id="GO:0019856">
    <property type="term" value="P:pyrimidine nucleobase biosynthetic process"/>
    <property type="evidence" value="ECO:0007669"/>
    <property type="project" value="TreeGrafter"/>
</dbReference>
<dbReference type="CDD" id="cd03113">
    <property type="entry name" value="CTPS_N"/>
    <property type="match status" value="1"/>
</dbReference>
<dbReference type="CDD" id="cd01746">
    <property type="entry name" value="GATase1_CTP_Synthase"/>
    <property type="match status" value="1"/>
</dbReference>
<dbReference type="FunFam" id="3.40.50.300:FF:000009">
    <property type="entry name" value="CTP synthase"/>
    <property type="match status" value="1"/>
</dbReference>
<dbReference type="FunFam" id="3.40.50.880:FF:000002">
    <property type="entry name" value="CTP synthase"/>
    <property type="match status" value="1"/>
</dbReference>
<dbReference type="Gene3D" id="3.40.50.880">
    <property type="match status" value="1"/>
</dbReference>
<dbReference type="Gene3D" id="3.40.50.300">
    <property type="entry name" value="P-loop containing nucleotide triphosphate hydrolases"/>
    <property type="match status" value="1"/>
</dbReference>
<dbReference type="HAMAP" id="MF_01227">
    <property type="entry name" value="PyrG"/>
    <property type="match status" value="1"/>
</dbReference>
<dbReference type="InterPro" id="IPR029062">
    <property type="entry name" value="Class_I_gatase-like"/>
</dbReference>
<dbReference type="InterPro" id="IPR004468">
    <property type="entry name" value="CTP_synthase"/>
</dbReference>
<dbReference type="InterPro" id="IPR017456">
    <property type="entry name" value="CTP_synthase_N"/>
</dbReference>
<dbReference type="InterPro" id="IPR017926">
    <property type="entry name" value="GATASE"/>
</dbReference>
<dbReference type="InterPro" id="IPR033828">
    <property type="entry name" value="GATase1_CTP_Synthase"/>
</dbReference>
<dbReference type="InterPro" id="IPR027417">
    <property type="entry name" value="P-loop_NTPase"/>
</dbReference>
<dbReference type="NCBIfam" id="NF003792">
    <property type="entry name" value="PRK05380.1"/>
    <property type="match status" value="1"/>
</dbReference>
<dbReference type="NCBIfam" id="TIGR00337">
    <property type="entry name" value="PyrG"/>
    <property type="match status" value="1"/>
</dbReference>
<dbReference type="PANTHER" id="PTHR11550">
    <property type="entry name" value="CTP SYNTHASE"/>
    <property type="match status" value="1"/>
</dbReference>
<dbReference type="PANTHER" id="PTHR11550:SF0">
    <property type="entry name" value="CTP SYNTHASE-RELATED"/>
    <property type="match status" value="1"/>
</dbReference>
<dbReference type="Pfam" id="PF06418">
    <property type="entry name" value="CTP_synth_N"/>
    <property type="match status" value="1"/>
</dbReference>
<dbReference type="Pfam" id="PF00117">
    <property type="entry name" value="GATase"/>
    <property type="match status" value="1"/>
</dbReference>
<dbReference type="SUPFAM" id="SSF52317">
    <property type="entry name" value="Class I glutamine amidotransferase-like"/>
    <property type="match status" value="1"/>
</dbReference>
<dbReference type="SUPFAM" id="SSF52540">
    <property type="entry name" value="P-loop containing nucleoside triphosphate hydrolases"/>
    <property type="match status" value="1"/>
</dbReference>
<dbReference type="PROSITE" id="PS51273">
    <property type="entry name" value="GATASE_TYPE_1"/>
    <property type="match status" value="1"/>
</dbReference>
<gene>
    <name evidence="1" type="primary">pyrG</name>
    <name type="synonym">ctrA</name>
    <name type="ordered locus">BH3792</name>
</gene>
<proteinExistence type="inferred from homology"/>
<evidence type="ECO:0000255" key="1">
    <source>
        <dbReference type="HAMAP-Rule" id="MF_01227"/>
    </source>
</evidence>
<reference key="1">
    <citation type="journal article" date="2000" name="Nucleic Acids Res.">
        <title>Complete genome sequence of the alkaliphilic bacterium Bacillus halodurans and genomic sequence comparison with Bacillus subtilis.</title>
        <authorList>
            <person name="Takami H."/>
            <person name="Nakasone K."/>
            <person name="Takaki Y."/>
            <person name="Maeno G."/>
            <person name="Sasaki R."/>
            <person name="Masui N."/>
            <person name="Fuji F."/>
            <person name="Hirama C."/>
            <person name="Nakamura Y."/>
            <person name="Ogasawara N."/>
            <person name="Kuhara S."/>
            <person name="Horikoshi K."/>
        </authorList>
    </citation>
    <scope>NUCLEOTIDE SEQUENCE [LARGE SCALE GENOMIC DNA]</scope>
    <source>
        <strain>ATCC BAA-125 / DSM 18197 / FERM 7344 / JCM 9153 / C-125</strain>
    </source>
</reference>
<sequence>MTTKYIFVTGGVVSSLGKGITAASLGRLLKNRGMKVTIQKFDPYINVDPGTMSPYQHGEVFVTDDGAETDLDLGHYERFIDINLNKNSNVTTGKIYSSVLKKERRGDYLGGTVQVIPHVTNEIKERVFRAGRETNADVVITEIGGTVGDIESLPFLEAIRQIKSDIGVDNVMYIHCTLIPYLAAAGEMKSKPTQHSVKELRSLGIQPNVIVVRTEKPVPEEMKEKIALFCDIRKDSVIEARDADTLYEVPLDLQAQNLDEIVCDHLNLSCQEADMTEWKSLVEKVKNLSGLVKIALVGKYVALPDAYLSVAEALRHAGYAFDADINIKWVDSEDVTAENVAEQLQGVDGILVPGGFGDRGIEGKIEAIRYAREQKIPFLGICLGMQLASIEFARNVLGLEGAHSAEINPDTPHPIIDLLPEQKDVEDMGGTLRLGLYPCKLKNGTLAQSAYNDQVIYERHRHRYEFNNQYREQMEAKGFMFSGTSPDGRLVEIVELGDHPFFIASQFHPEFVSRPTRPQPLFREFIQASLRK</sequence>
<comment type="function">
    <text evidence="1">Catalyzes the ATP-dependent amination of UTP to CTP with either L-glutamine or ammonia as the source of nitrogen. Regulates intracellular CTP levels through interactions with the four ribonucleotide triphosphates.</text>
</comment>
<comment type="catalytic activity">
    <reaction evidence="1">
        <text>UTP + L-glutamine + ATP + H2O = CTP + L-glutamate + ADP + phosphate + 2 H(+)</text>
        <dbReference type="Rhea" id="RHEA:26426"/>
        <dbReference type="ChEBI" id="CHEBI:15377"/>
        <dbReference type="ChEBI" id="CHEBI:15378"/>
        <dbReference type="ChEBI" id="CHEBI:29985"/>
        <dbReference type="ChEBI" id="CHEBI:30616"/>
        <dbReference type="ChEBI" id="CHEBI:37563"/>
        <dbReference type="ChEBI" id="CHEBI:43474"/>
        <dbReference type="ChEBI" id="CHEBI:46398"/>
        <dbReference type="ChEBI" id="CHEBI:58359"/>
        <dbReference type="ChEBI" id="CHEBI:456216"/>
        <dbReference type="EC" id="6.3.4.2"/>
    </reaction>
</comment>
<comment type="catalytic activity">
    <reaction evidence="1">
        <text>L-glutamine + H2O = L-glutamate + NH4(+)</text>
        <dbReference type="Rhea" id="RHEA:15889"/>
        <dbReference type="ChEBI" id="CHEBI:15377"/>
        <dbReference type="ChEBI" id="CHEBI:28938"/>
        <dbReference type="ChEBI" id="CHEBI:29985"/>
        <dbReference type="ChEBI" id="CHEBI:58359"/>
    </reaction>
</comment>
<comment type="catalytic activity">
    <reaction evidence="1">
        <text>UTP + NH4(+) + ATP = CTP + ADP + phosphate + 2 H(+)</text>
        <dbReference type="Rhea" id="RHEA:16597"/>
        <dbReference type="ChEBI" id="CHEBI:15378"/>
        <dbReference type="ChEBI" id="CHEBI:28938"/>
        <dbReference type="ChEBI" id="CHEBI:30616"/>
        <dbReference type="ChEBI" id="CHEBI:37563"/>
        <dbReference type="ChEBI" id="CHEBI:43474"/>
        <dbReference type="ChEBI" id="CHEBI:46398"/>
        <dbReference type="ChEBI" id="CHEBI:456216"/>
    </reaction>
</comment>
<comment type="activity regulation">
    <text evidence="1">Allosterically activated by GTP, when glutamine is the substrate; GTP has no effect on the reaction when ammonia is the substrate. The allosteric effector GTP functions by stabilizing the protein conformation that binds the tetrahedral intermediate(s) formed during glutamine hydrolysis. Inhibited by the product CTP, via allosteric rather than competitive inhibition.</text>
</comment>
<comment type="pathway">
    <text evidence="1">Pyrimidine metabolism; CTP biosynthesis via de novo pathway; CTP from UDP: step 2/2.</text>
</comment>
<comment type="subunit">
    <text evidence="1">Homotetramer.</text>
</comment>
<comment type="miscellaneous">
    <text evidence="1">CTPSs have evolved a hybrid strategy for distinguishing between UTP and CTP. The overlapping regions of the product feedback inhibitory and substrate sites recognize a common feature in both compounds, the triphosphate moiety. To differentiate isosteric substrate and product pyrimidine rings, an additional pocket far from the expected kinase/ligase catalytic site, specifically recognizes the cytosine and ribose portions of the product inhibitor.</text>
</comment>
<comment type="similarity">
    <text evidence="1">Belongs to the CTP synthase family.</text>
</comment>